<accession>Q9I6G2</accession>
<name>Y329_PSEAE</name>
<gene>
    <name type="ordered locus">PA0329</name>
</gene>
<comment type="similarity">
    <text evidence="2">Belongs to the UPF0339 family. Duplicated subfamily.</text>
</comment>
<proteinExistence type="inferred from homology"/>
<sequence>MAAKFHLKKAKDGQFHFNLHAANGEIILTSELYKAKDSALGGIESVRKNSQRDGAFEVKPANNGKFHFVLKATNGQVVGQSQLYASQANAEAGVQSVKRATPEAGLSDES</sequence>
<feature type="chain" id="PRO_0000218143" description="UPF0339 protein PA0329">
    <location>
        <begin position="1"/>
        <end position="110"/>
    </location>
</feature>
<feature type="repeat" description="1">
    <location>
        <begin position="10"/>
        <end position="58"/>
    </location>
</feature>
<feature type="repeat" description="2">
    <location>
        <begin position="61"/>
        <end position="109"/>
    </location>
</feature>
<feature type="region of interest" description="Disordered" evidence="1">
    <location>
        <begin position="91"/>
        <end position="110"/>
    </location>
</feature>
<reference key="1">
    <citation type="journal article" date="2000" name="Nature">
        <title>Complete genome sequence of Pseudomonas aeruginosa PAO1, an opportunistic pathogen.</title>
        <authorList>
            <person name="Stover C.K."/>
            <person name="Pham X.-Q.T."/>
            <person name="Erwin A.L."/>
            <person name="Mizoguchi S.D."/>
            <person name="Warrener P."/>
            <person name="Hickey M.J."/>
            <person name="Brinkman F.S.L."/>
            <person name="Hufnagle W.O."/>
            <person name="Kowalik D.J."/>
            <person name="Lagrou M."/>
            <person name="Garber R.L."/>
            <person name="Goltry L."/>
            <person name="Tolentino E."/>
            <person name="Westbrock-Wadman S."/>
            <person name="Yuan Y."/>
            <person name="Brody L.L."/>
            <person name="Coulter S.N."/>
            <person name="Folger K.R."/>
            <person name="Kas A."/>
            <person name="Larbig K."/>
            <person name="Lim R.M."/>
            <person name="Smith K.A."/>
            <person name="Spencer D.H."/>
            <person name="Wong G.K.-S."/>
            <person name="Wu Z."/>
            <person name="Paulsen I.T."/>
            <person name="Reizer J."/>
            <person name="Saier M.H. Jr."/>
            <person name="Hancock R.E.W."/>
            <person name="Lory S."/>
            <person name="Olson M.V."/>
        </authorList>
    </citation>
    <scope>NUCLEOTIDE SEQUENCE [LARGE SCALE GENOMIC DNA]</scope>
    <source>
        <strain>ATCC 15692 / DSM 22644 / CIP 104116 / JCM 14847 / LMG 12228 / 1C / PRS 101 / PAO1</strain>
    </source>
</reference>
<keyword id="KW-1185">Reference proteome</keyword>
<keyword id="KW-0677">Repeat</keyword>
<evidence type="ECO:0000256" key="1">
    <source>
        <dbReference type="SAM" id="MobiDB-lite"/>
    </source>
</evidence>
<evidence type="ECO:0000305" key="2"/>
<dbReference type="EMBL" id="AE004091">
    <property type="protein sequence ID" value="AAG03718.1"/>
    <property type="molecule type" value="Genomic_DNA"/>
</dbReference>
<dbReference type="PIR" id="D83603">
    <property type="entry name" value="D83603"/>
</dbReference>
<dbReference type="RefSeq" id="NP_249020.1">
    <property type="nucleotide sequence ID" value="NC_002516.2"/>
</dbReference>
<dbReference type="RefSeq" id="WP_003112957.1">
    <property type="nucleotide sequence ID" value="NZ_QZGE01000016.1"/>
</dbReference>
<dbReference type="SMR" id="Q9I6G2"/>
<dbReference type="FunCoup" id="Q9I6G2">
    <property type="interactions" value="4"/>
</dbReference>
<dbReference type="STRING" id="208964.PA0329"/>
<dbReference type="PaxDb" id="208964-PA0329"/>
<dbReference type="DNASU" id="882179"/>
<dbReference type="GeneID" id="882179"/>
<dbReference type="KEGG" id="pae:PA0329"/>
<dbReference type="PATRIC" id="fig|208964.12.peg.345"/>
<dbReference type="PseudoCAP" id="PA0329"/>
<dbReference type="HOGENOM" id="CLU_163886_0_0_6"/>
<dbReference type="InParanoid" id="Q9I6G2"/>
<dbReference type="OrthoDB" id="9802792at2"/>
<dbReference type="PhylomeDB" id="Q9I6G2"/>
<dbReference type="BioCyc" id="PAER208964:G1FZ6-332-MONOMER"/>
<dbReference type="Proteomes" id="UP000002438">
    <property type="component" value="Chromosome"/>
</dbReference>
<dbReference type="Gene3D" id="2.30.29.80">
    <property type="match status" value="1"/>
</dbReference>
<dbReference type="InterPro" id="IPR010879">
    <property type="entry name" value="DUF1508"/>
</dbReference>
<dbReference type="InterPro" id="IPR051141">
    <property type="entry name" value="UPF0339_domain"/>
</dbReference>
<dbReference type="InterPro" id="IPR036913">
    <property type="entry name" value="YegP-like_sf"/>
</dbReference>
<dbReference type="PANTHER" id="PTHR40606">
    <property type="match status" value="1"/>
</dbReference>
<dbReference type="PANTHER" id="PTHR40606:SF1">
    <property type="entry name" value="UPF0339 PROTEIN YEGP"/>
    <property type="match status" value="1"/>
</dbReference>
<dbReference type="Pfam" id="PF07411">
    <property type="entry name" value="DUF1508"/>
    <property type="match status" value="2"/>
</dbReference>
<dbReference type="SUPFAM" id="SSF160113">
    <property type="entry name" value="YegP-like"/>
    <property type="match status" value="2"/>
</dbReference>
<organism>
    <name type="scientific">Pseudomonas aeruginosa (strain ATCC 15692 / DSM 22644 / CIP 104116 / JCM 14847 / LMG 12228 / 1C / PRS 101 / PAO1)</name>
    <dbReference type="NCBI Taxonomy" id="208964"/>
    <lineage>
        <taxon>Bacteria</taxon>
        <taxon>Pseudomonadati</taxon>
        <taxon>Pseudomonadota</taxon>
        <taxon>Gammaproteobacteria</taxon>
        <taxon>Pseudomonadales</taxon>
        <taxon>Pseudomonadaceae</taxon>
        <taxon>Pseudomonas</taxon>
    </lineage>
</organism>
<protein>
    <recommendedName>
        <fullName>UPF0339 protein PA0329</fullName>
    </recommendedName>
</protein>